<protein>
    <recommendedName>
        <fullName evidence="1">Ion-translocating oxidoreductase complex subunit B</fullName>
        <ecNumber evidence="1">7.-.-.-</ecNumber>
    </recommendedName>
    <alternativeName>
        <fullName evidence="1">Rnf electron transport complex subunit B</fullName>
    </alternativeName>
</protein>
<gene>
    <name evidence="1" type="primary">rnfB</name>
    <name type="ordered locus">ETA_17750</name>
</gene>
<reference key="1">
    <citation type="journal article" date="2008" name="Environ. Microbiol.">
        <title>The genome of Erwinia tasmaniensis strain Et1/99, a non-pathogenic bacterium in the genus Erwinia.</title>
        <authorList>
            <person name="Kube M."/>
            <person name="Migdoll A.M."/>
            <person name="Mueller I."/>
            <person name="Kuhl H."/>
            <person name="Beck A."/>
            <person name="Reinhardt R."/>
            <person name="Geider K."/>
        </authorList>
    </citation>
    <scope>NUCLEOTIDE SEQUENCE [LARGE SCALE GENOMIC DNA]</scope>
    <source>
        <strain>DSM 17950 / CFBP 7177 / CIP 109463 / NCPPB 4357 / Et1/99</strain>
    </source>
</reference>
<keyword id="KW-0004">4Fe-4S</keyword>
<keyword id="KW-0997">Cell inner membrane</keyword>
<keyword id="KW-1003">Cell membrane</keyword>
<keyword id="KW-0249">Electron transport</keyword>
<keyword id="KW-0408">Iron</keyword>
<keyword id="KW-0411">Iron-sulfur</keyword>
<keyword id="KW-0472">Membrane</keyword>
<keyword id="KW-0479">Metal-binding</keyword>
<keyword id="KW-1185">Reference proteome</keyword>
<keyword id="KW-0677">Repeat</keyword>
<keyword id="KW-1278">Translocase</keyword>
<keyword id="KW-0813">Transport</keyword>
<feature type="chain" id="PRO_1000194473" description="Ion-translocating oxidoreductase complex subunit B">
    <location>
        <begin position="1"/>
        <end position="191"/>
    </location>
</feature>
<feature type="domain" description="4Fe-4S" evidence="1">
    <location>
        <begin position="32"/>
        <end position="91"/>
    </location>
</feature>
<feature type="domain" description="4Fe-4S ferredoxin-type 1" evidence="1">
    <location>
        <begin position="107"/>
        <end position="136"/>
    </location>
</feature>
<feature type="domain" description="4Fe-4S ferredoxin-type 2" evidence="1">
    <location>
        <begin position="137"/>
        <end position="166"/>
    </location>
</feature>
<feature type="region of interest" description="Hydrophobic" evidence="1">
    <location>
        <begin position="1"/>
        <end position="26"/>
    </location>
</feature>
<feature type="binding site" evidence="1">
    <location>
        <position position="49"/>
    </location>
    <ligand>
        <name>[4Fe-4S] cluster</name>
        <dbReference type="ChEBI" id="CHEBI:49883"/>
        <label>1</label>
    </ligand>
</feature>
<feature type="binding site" evidence="1">
    <location>
        <position position="52"/>
    </location>
    <ligand>
        <name>[4Fe-4S] cluster</name>
        <dbReference type="ChEBI" id="CHEBI:49883"/>
        <label>1</label>
    </ligand>
</feature>
<feature type="binding site" evidence="1">
    <location>
        <position position="57"/>
    </location>
    <ligand>
        <name>[4Fe-4S] cluster</name>
        <dbReference type="ChEBI" id="CHEBI:49883"/>
        <label>1</label>
    </ligand>
</feature>
<feature type="binding site" evidence="1">
    <location>
        <position position="74"/>
    </location>
    <ligand>
        <name>[4Fe-4S] cluster</name>
        <dbReference type="ChEBI" id="CHEBI:49883"/>
        <label>1</label>
    </ligand>
</feature>
<feature type="binding site" evidence="1">
    <location>
        <position position="116"/>
    </location>
    <ligand>
        <name>[4Fe-4S] cluster</name>
        <dbReference type="ChEBI" id="CHEBI:49883"/>
        <label>2</label>
    </ligand>
</feature>
<feature type="binding site" evidence="1">
    <location>
        <position position="119"/>
    </location>
    <ligand>
        <name>[4Fe-4S] cluster</name>
        <dbReference type="ChEBI" id="CHEBI:49883"/>
        <label>2</label>
    </ligand>
</feature>
<feature type="binding site" evidence="1">
    <location>
        <position position="122"/>
    </location>
    <ligand>
        <name>[4Fe-4S] cluster</name>
        <dbReference type="ChEBI" id="CHEBI:49883"/>
        <label>2</label>
    </ligand>
</feature>
<feature type="binding site" evidence="1">
    <location>
        <position position="126"/>
    </location>
    <ligand>
        <name>[4Fe-4S] cluster</name>
        <dbReference type="ChEBI" id="CHEBI:49883"/>
        <label>3</label>
    </ligand>
</feature>
<feature type="binding site" evidence="1">
    <location>
        <position position="146"/>
    </location>
    <ligand>
        <name>[4Fe-4S] cluster</name>
        <dbReference type="ChEBI" id="CHEBI:49883"/>
        <label>3</label>
    </ligand>
</feature>
<feature type="binding site" evidence="1">
    <location>
        <position position="149"/>
    </location>
    <ligand>
        <name>[4Fe-4S] cluster</name>
        <dbReference type="ChEBI" id="CHEBI:49883"/>
        <label>3</label>
    </ligand>
</feature>
<feature type="binding site" evidence="1">
    <location>
        <position position="152"/>
    </location>
    <ligand>
        <name>[4Fe-4S] cluster</name>
        <dbReference type="ChEBI" id="CHEBI:49883"/>
        <label>3</label>
    </ligand>
</feature>
<feature type="binding site" evidence="1">
    <location>
        <position position="156"/>
    </location>
    <ligand>
        <name>[4Fe-4S] cluster</name>
        <dbReference type="ChEBI" id="CHEBI:49883"/>
        <label>2</label>
    </ligand>
</feature>
<dbReference type="EC" id="7.-.-.-" evidence="1"/>
<dbReference type="EMBL" id="CU468135">
    <property type="protein sequence ID" value="CAO96821.1"/>
    <property type="molecule type" value="Genomic_DNA"/>
</dbReference>
<dbReference type="RefSeq" id="WP_012441510.1">
    <property type="nucleotide sequence ID" value="NC_010694.1"/>
</dbReference>
<dbReference type="STRING" id="465817.ETA_17750"/>
<dbReference type="KEGG" id="eta:ETA_17750"/>
<dbReference type="eggNOG" id="COG2878">
    <property type="taxonomic scope" value="Bacteria"/>
</dbReference>
<dbReference type="HOGENOM" id="CLU_063448_2_0_6"/>
<dbReference type="OrthoDB" id="9789936at2"/>
<dbReference type="Proteomes" id="UP000001726">
    <property type="component" value="Chromosome"/>
</dbReference>
<dbReference type="GO" id="GO:0005886">
    <property type="term" value="C:plasma membrane"/>
    <property type="evidence" value="ECO:0007669"/>
    <property type="project" value="UniProtKB-SubCell"/>
</dbReference>
<dbReference type="GO" id="GO:0051539">
    <property type="term" value="F:4 iron, 4 sulfur cluster binding"/>
    <property type="evidence" value="ECO:0007669"/>
    <property type="project" value="UniProtKB-UniRule"/>
</dbReference>
<dbReference type="GO" id="GO:0009055">
    <property type="term" value="F:electron transfer activity"/>
    <property type="evidence" value="ECO:0007669"/>
    <property type="project" value="InterPro"/>
</dbReference>
<dbReference type="GO" id="GO:0046872">
    <property type="term" value="F:metal ion binding"/>
    <property type="evidence" value="ECO:0007669"/>
    <property type="project" value="UniProtKB-KW"/>
</dbReference>
<dbReference type="GO" id="GO:0022900">
    <property type="term" value="P:electron transport chain"/>
    <property type="evidence" value="ECO:0007669"/>
    <property type="project" value="UniProtKB-UniRule"/>
</dbReference>
<dbReference type="FunFam" id="1.10.15.40:FF:000001">
    <property type="entry name" value="Ion-translocating oxidoreductase complex subunit B"/>
    <property type="match status" value="1"/>
</dbReference>
<dbReference type="Gene3D" id="3.30.70.20">
    <property type="match status" value="1"/>
</dbReference>
<dbReference type="Gene3D" id="1.10.15.40">
    <property type="entry name" value="Electron transport complex subunit B, putative Fe-S cluster"/>
    <property type="match status" value="1"/>
</dbReference>
<dbReference type="HAMAP" id="MF_00463">
    <property type="entry name" value="RsxB_RnfB"/>
    <property type="match status" value="1"/>
</dbReference>
<dbReference type="InterPro" id="IPR007202">
    <property type="entry name" value="4Fe-4S_dom"/>
</dbReference>
<dbReference type="InterPro" id="IPR017896">
    <property type="entry name" value="4Fe4S_Fe-S-bd"/>
</dbReference>
<dbReference type="InterPro" id="IPR017900">
    <property type="entry name" value="4Fe4S_Fe_S_CS"/>
</dbReference>
<dbReference type="InterPro" id="IPR010207">
    <property type="entry name" value="Elect_transpt_cplx_RnfB/RsxB"/>
</dbReference>
<dbReference type="InterPro" id="IPR016463">
    <property type="entry name" value="RnfB/RsxB_Proteobac"/>
</dbReference>
<dbReference type="InterPro" id="IPR050294">
    <property type="entry name" value="RnfB_subfamily"/>
</dbReference>
<dbReference type="NCBIfam" id="NF003475">
    <property type="entry name" value="PRK05113.1"/>
    <property type="match status" value="1"/>
</dbReference>
<dbReference type="NCBIfam" id="TIGR01944">
    <property type="entry name" value="rnfB"/>
    <property type="match status" value="1"/>
</dbReference>
<dbReference type="PANTHER" id="PTHR42859:SF3">
    <property type="entry name" value="ION-TRANSLOCATING OXIDOREDUCTASE COMPLEX SUBUNIT B"/>
    <property type="match status" value="1"/>
</dbReference>
<dbReference type="PANTHER" id="PTHR42859">
    <property type="entry name" value="OXIDOREDUCTASE"/>
    <property type="match status" value="1"/>
</dbReference>
<dbReference type="Pfam" id="PF14697">
    <property type="entry name" value="Fer4_21"/>
    <property type="match status" value="1"/>
</dbReference>
<dbReference type="Pfam" id="PF04060">
    <property type="entry name" value="FeS"/>
    <property type="match status" value="1"/>
</dbReference>
<dbReference type="PIRSF" id="PIRSF005784">
    <property type="entry name" value="Elect_transpt_RnfB"/>
    <property type="match status" value="1"/>
</dbReference>
<dbReference type="SUPFAM" id="SSF54862">
    <property type="entry name" value="4Fe-4S ferredoxins"/>
    <property type="match status" value="1"/>
</dbReference>
<dbReference type="PROSITE" id="PS51656">
    <property type="entry name" value="4FE4S"/>
    <property type="match status" value="1"/>
</dbReference>
<dbReference type="PROSITE" id="PS00198">
    <property type="entry name" value="4FE4S_FER_1"/>
    <property type="match status" value="2"/>
</dbReference>
<dbReference type="PROSITE" id="PS51379">
    <property type="entry name" value="4FE4S_FER_2"/>
    <property type="match status" value="2"/>
</dbReference>
<organism>
    <name type="scientific">Erwinia tasmaniensis (strain DSM 17950 / CFBP 7177 / CIP 109463 / NCPPB 4357 / Et1/99)</name>
    <dbReference type="NCBI Taxonomy" id="465817"/>
    <lineage>
        <taxon>Bacteria</taxon>
        <taxon>Pseudomonadati</taxon>
        <taxon>Pseudomonadota</taxon>
        <taxon>Gammaproteobacteria</taxon>
        <taxon>Enterobacterales</taxon>
        <taxon>Erwiniaceae</taxon>
        <taxon>Erwinia</taxon>
    </lineage>
</organism>
<comment type="function">
    <text evidence="1">Part of a membrane-bound complex that couples electron transfer with translocation of ions across the membrane.</text>
</comment>
<comment type="cofactor">
    <cofactor evidence="1">
        <name>[4Fe-4S] cluster</name>
        <dbReference type="ChEBI" id="CHEBI:49883"/>
    </cofactor>
    <text evidence="1">Binds 3 [4Fe-4S] clusters.</text>
</comment>
<comment type="subunit">
    <text evidence="1">The complex is composed of six subunits: RnfA, RnfB, RnfC, RnfD, RnfE and RnfG.</text>
</comment>
<comment type="subcellular location">
    <subcellularLocation>
        <location evidence="1">Cell inner membrane</location>
    </subcellularLocation>
</comment>
<comment type="similarity">
    <text evidence="1">Belongs to the 4Fe4S bacterial-type ferredoxin family. RnfB subfamily.</text>
</comment>
<proteinExistence type="inferred from homology"/>
<evidence type="ECO:0000255" key="1">
    <source>
        <dbReference type="HAMAP-Rule" id="MF_00463"/>
    </source>
</evidence>
<accession>B2VEQ2</accession>
<name>RNFB_ERWT9</name>
<sequence length="191" mass="20399">MSAIWIAIAVLSALSLVFGGLLGYASRRFAVEEDPIVEQIDAILPQSQCGQCGYPGCRPYADAVGNNGEMINKCAPGGEQTMLKLAALLNVEPQPLGAEEAREPERKVAWIDEANCIGCTKCIQACPVDAIVGATRAMHTVLSDICTGCDLCVAPCPTDCIEMRPVATTTANWKWDLHTIPVRVITVESHA</sequence>